<name>ARAG1_BURCM</name>
<protein>
    <recommendedName>
        <fullName evidence="1">Arabinose import ATP-binding protein AraG 1</fullName>
        <ecNumber evidence="1">7.5.2.12</ecNumber>
    </recommendedName>
</protein>
<proteinExistence type="inferred from homology"/>
<evidence type="ECO:0000255" key="1">
    <source>
        <dbReference type="HAMAP-Rule" id="MF_01721"/>
    </source>
</evidence>
<evidence type="ECO:0000305" key="2"/>
<organism>
    <name type="scientific">Burkholderia ambifaria (strain ATCC BAA-244 / DSM 16087 / CCUG 44356 / LMG 19182 / AMMD)</name>
    <name type="common">Burkholderia cepacia (strain AMMD)</name>
    <dbReference type="NCBI Taxonomy" id="339670"/>
    <lineage>
        <taxon>Bacteria</taxon>
        <taxon>Pseudomonadati</taxon>
        <taxon>Pseudomonadota</taxon>
        <taxon>Betaproteobacteria</taxon>
        <taxon>Burkholderiales</taxon>
        <taxon>Burkholderiaceae</taxon>
        <taxon>Burkholderia</taxon>
        <taxon>Burkholderia cepacia complex</taxon>
    </lineage>
</organism>
<dbReference type="EC" id="7.5.2.12" evidence="1"/>
<dbReference type="EMBL" id="CP000440">
    <property type="protein sequence ID" value="ABI86082.1"/>
    <property type="status" value="ALT_INIT"/>
    <property type="molecule type" value="Genomic_DNA"/>
</dbReference>
<dbReference type="SMR" id="Q0BIE1"/>
<dbReference type="KEGG" id="bam:Bamb_0523"/>
<dbReference type="PATRIC" id="fig|339670.21.peg.1080"/>
<dbReference type="eggNOG" id="COG1129">
    <property type="taxonomic scope" value="Bacteria"/>
</dbReference>
<dbReference type="Proteomes" id="UP000000662">
    <property type="component" value="Chromosome 1"/>
</dbReference>
<dbReference type="GO" id="GO:0005886">
    <property type="term" value="C:plasma membrane"/>
    <property type="evidence" value="ECO:0007669"/>
    <property type="project" value="UniProtKB-SubCell"/>
</dbReference>
<dbReference type="GO" id="GO:0015612">
    <property type="term" value="F:ABC-type L-arabinose transporter activity"/>
    <property type="evidence" value="ECO:0007669"/>
    <property type="project" value="UniProtKB-EC"/>
</dbReference>
<dbReference type="GO" id="GO:0005524">
    <property type="term" value="F:ATP binding"/>
    <property type="evidence" value="ECO:0007669"/>
    <property type="project" value="UniProtKB-KW"/>
</dbReference>
<dbReference type="GO" id="GO:0016887">
    <property type="term" value="F:ATP hydrolysis activity"/>
    <property type="evidence" value="ECO:0007669"/>
    <property type="project" value="InterPro"/>
</dbReference>
<dbReference type="CDD" id="cd03216">
    <property type="entry name" value="ABC_Carb_Monos_I"/>
    <property type="match status" value="1"/>
</dbReference>
<dbReference type="CDD" id="cd03215">
    <property type="entry name" value="ABC_Carb_Monos_II"/>
    <property type="match status" value="1"/>
</dbReference>
<dbReference type="FunFam" id="3.40.50.300:FF:000126">
    <property type="entry name" value="Galactose/methyl galactoside import ATP-binding protein MglA"/>
    <property type="match status" value="1"/>
</dbReference>
<dbReference type="FunFam" id="3.40.50.300:FF:000127">
    <property type="entry name" value="Ribose import ATP-binding protein RbsA"/>
    <property type="match status" value="1"/>
</dbReference>
<dbReference type="Gene3D" id="3.40.50.300">
    <property type="entry name" value="P-loop containing nucleotide triphosphate hydrolases"/>
    <property type="match status" value="2"/>
</dbReference>
<dbReference type="InterPro" id="IPR003593">
    <property type="entry name" value="AAA+_ATPase"/>
</dbReference>
<dbReference type="InterPro" id="IPR050107">
    <property type="entry name" value="ABC_carbohydrate_import_ATPase"/>
</dbReference>
<dbReference type="InterPro" id="IPR003439">
    <property type="entry name" value="ABC_transporter-like_ATP-bd"/>
</dbReference>
<dbReference type="InterPro" id="IPR017871">
    <property type="entry name" value="ABC_transporter-like_CS"/>
</dbReference>
<dbReference type="InterPro" id="IPR027417">
    <property type="entry name" value="P-loop_NTPase"/>
</dbReference>
<dbReference type="NCBIfam" id="NF008442">
    <property type="entry name" value="PRK11288.1"/>
    <property type="match status" value="1"/>
</dbReference>
<dbReference type="PANTHER" id="PTHR43790:SF6">
    <property type="entry name" value="ARABINOSE IMPORT ATP-BINDING PROTEIN ARAG"/>
    <property type="match status" value="1"/>
</dbReference>
<dbReference type="PANTHER" id="PTHR43790">
    <property type="entry name" value="CARBOHYDRATE TRANSPORT ATP-BINDING PROTEIN MG119-RELATED"/>
    <property type="match status" value="1"/>
</dbReference>
<dbReference type="Pfam" id="PF00005">
    <property type="entry name" value="ABC_tran"/>
    <property type="match status" value="2"/>
</dbReference>
<dbReference type="SMART" id="SM00382">
    <property type="entry name" value="AAA"/>
    <property type="match status" value="2"/>
</dbReference>
<dbReference type="SUPFAM" id="SSF52540">
    <property type="entry name" value="P-loop containing nucleoside triphosphate hydrolases"/>
    <property type="match status" value="2"/>
</dbReference>
<dbReference type="PROSITE" id="PS00211">
    <property type="entry name" value="ABC_TRANSPORTER_1"/>
    <property type="match status" value="1"/>
</dbReference>
<dbReference type="PROSITE" id="PS50893">
    <property type="entry name" value="ABC_TRANSPORTER_2"/>
    <property type="match status" value="2"/>
</dbReference>
<dbReference type="PROSITE" id="PS51268">
    <property type="entry name" value="ARAG"/>
    <property type="match status" value="1"/>
</dbReference>
<sequence length="503" mass="55117">MSAALRFDNIGKVFPGVRALDGISFDVHAGEVHGLMGENGAGKSTLLKILGGEYQPDAGSVLVDGQPVHFSSAAASIAAGIAVIHQELQYVPDLTVAENLLLGRLPNALGWVKKGEAKRHVRERLTAMGVDLDPDAKLGRLSIAQRQMVEICKALMRNARVIALDEPTSSLSHRETEVLFKLVDDLRAQGRALIYISHRMDEIYRLCDACTIFRDGRKIASHESLADVPREQLVAEMVGREISDIYHYAPRALGDVRFSAEGVDGPALREPASFSVRAGEIVGFFGLVGAGRSELMRLVYGADRRRAGELTLDGKRIDVKRTGDAIRHGIVLCPEDRKEEGIIAMASVAENINISCRRHSLRAGLFIDRKTEIETADRFIQRLKIKTPNRRQKIRFLSGGNQQKAILSRWLAEPDLKVVILDEPTRGIDVGAKHEIYDVIYRLAERGCAIVMVSSELPEVLGVSDRIVVMREGRIAGELARAQANEHAVLSLALPQTSVAEAA</sequence>
<accession>Q0BIE1</accession>
<comment type="function">
    <text evidence="1">Part of the ABC transporter complex AraFGH involved in arabinose import. Responsible for energy coupling to the transport system.</text>
</comment>
<comment type="catalytic activity">
    <reaction evidence="1">
        <text>L-arabinose(out) + ATP + H2O = L-arabinose(in) + ADP + phosphate + H(+)</text>
        <dbReference type="Rhea" id="RHEA:30007"/>
        <dbReference type="ChEBI" id="CHEBI:15377"/>
        <dbReference type="ChEBI" id="CHEBI:15378"/>
        <dbReference type="ChEBI" id="CHEBI:17535"/>
        <dbReference type="ChEBI" id="CHEBI:30616"/>
        <dbReference type="ChEBI" id="CHEBI:43474"/>
        <dbReference type="ChEBI" id="CHEBI:456216"/>
        <dbReference type="EC" id="7.5.2.12"/>
    </reaction>
</comment>
<comment type="subunit">
    <text evidence="1">The complex is composed of two ATP-binding proteins (AraG), two transmembrane proteins (AraH) and a solute-binding protein (AraF).</text>
</comment>
<comment type="subcellular location">
    <subcellularLocation>
        <location evidence="1">Cell inner membrane</location>
        <topology evidence="1">Peripheral membrane protein</topology>
    </subcellularLocation>
</comment>
<comment type="similarity">
    <text evidence="1">Belongs to the ABC transporter superfamily. Arabinose importer (TC 3.A.1.2.2) family.</text>
</comment>
<comment type="sequence caution" evidence="2">
    <conflict type="erroneous initiation">
        <sequence resource="EMBL-CDS" id="ABI86082"/>
    </conflict>
</comment>
<reference key="1">
    <citation type="submission" date="2006-08" db="EMBL/GenBank/DDBJ databases">
        <title>Complete sequence of chromosome 1 of Burkholderia cepacia AMMD.</title>
        <authorList>
            <person name="Copeland A."/>
            <person name="Lucas S."/>
            <person name="Lapidus A."/>
            <person name="Barry K."/>
            <person name="Detter J.C."/>
            <person name="Glavina del Rio T."/>
            <person name="Hammon N."/>
            <person name="Israni S."/>
            <person name="Pitluck S."/>
            <person name="Bruce D."/>
            <person name="Chain P."/>
            <person name="Malfatti S."/>
            <person name="Shin M."/>
            <person name="Vergez L."/>
            <person name="Schmutz J."/>
            <person name="Larimer F."/>
            <person name="Land M."/>
            <person name="Hauser L."/>
            <person name="Kyrpides N."/>
            <person name="Kim E."/>
            <person name="Parke J."/>
            <person name="Coenye T."/>
            <person name="Konstantinidis K."/>
            <person name="Ramette A."/>
            <person name="Tiedje J."/>
            <person name="Richardson P."/>
        </authorList>
    </citation>
    <scope>NUCLEOTIDE SEQUENCE [LARGE SCALE GENOMIC DNA]</scope>
    <source>
        <strain>ATCC BAA-244 / DSM 16087 / CCUG 44356 / LMG 19182 / AMMD</strain>
    </source>
</reference>
<keyword id="KW-0067">ATP-binding</keyword>
<keyword id="KW-0997">Cell inner membrane</keyword>
<keyword id="KW-1003">Cell membrane</keyword>
<keyword id="KW-0472">Membrane</keyword>
<keyword id="KW-0547">Nucleotide-binding</keyword>
<keyword id="KW-0677">Repeat</keyword>
<keyword id="KW-0762">Sugar transport</keyword>
<keyword id="KW-1278">Translocase</keyword>
<keyword id="KW-0813">Transport</keyword>
<gene>
    <name evidence="1" type="primary">araG1</name>
    <name type="ordered locus">Bamb_0523</name>
</gene>
<feature type="chain" id="PRO_0000277699" description="Arabinose import ATP-binding protein AraG 1">
    <location>
        <begin position="1"/>
        <end position="503"/>
    </location>
</feature>
<feature type="domain" description="ABC transporter 1" evidence="1">
    <location>
        <begin position="5"/>
        <end position="240"/>
    </location>
</feature>
<feature type="domain" description="ABC transporter 2" evidence="1">
    <location>
        <begin position="251"/>
        <end position="497"/>
    </location>
</feature>
<feature type="binding site" evidence="1">
    <location>
        <begin position="37"/>
        <end position="44"/>
    </location>
    <ligand>
        <name>ATP</name>
        <dbReference type="ChEBI" id="CHEBI:30616"/>
    </ligand>
</feature>